<comment type="function">
    <text evidence="1">Forms part of the ribosomal stalk which helps the ribosome interact with GTP-bound translation factors.</text>
</comment>
<comment type="subunit">
    <text evidence="1">Part of the ribosomal stalk of the 50S ribosomal subunit. Interacts with L10 and the large rRNA to form the base of the stalk. L10 forms an elongated spine to which L12 dimers bind in a sequential fashion forming a multimeric L10(L12)X complex.</text>
</comment>
<comment type="PTM">
    <text evidence="1">One or more lysine residues are methylated.</text>
</comment>
<comment type="similarity">
    <text evidence="1">Belongs to the universal ribosomal protein uL11 family.</text>
</comment>
<feature type="chain" id="PRO_1000195600" description="Large ribosomal subunit protein uL11">
    <location>
        <begin position="1"/>
        <end position="141"/>
    </location>
</feature>
<organism>
    <name type="scientific">Clostridium botulinum (strain Alaska E43 / Type E3)</name>
    <dbReference type="NCBI Taxonomy" id="508767"/>
    <lineage>
        <taxon>Bacteria</taxon>
        <taxon>Bacillati</taxon>
        <taxon>Bacillota</taxon>
        <taxon>Clostridia</taxon>
        <taxon>Eubacteriales</taxon>
        <taxon>Clostridiaceae</taxon>
        <taxon>Clostridium</taxon>
    </lineage>
</organism>
<reference key="1">
    <citation type="submission" date="2008-05" db="EMBL/GenBank/DDBJ databases">
        <title>Complete genome sequence of Clostridium botulinum E3 str. Alaska E43.</title>
        <authorList>
            <person name="Brinkac L.M."/>
            <person name="Brown J.L."/>
            <person name="Bruce D."/>
            <person name="Detter C."/>
            <person name="Munk C."/>
            <person name="Smith L.A."/>
            <person name="Smith T.J."/>
            <person name="Sutton G."/>
            <person name="Brettin T.S."/>
        </authorList>
    </citation>
    <scope>NUCLEOTIDE SEQUENCE [LARGE SCALE GENOMIC DNA]</scope>
    <source>
        <strain>Alaska E43 / Type E3</strain>
    </source>
</reference>
<proteinExistence type="inferred from homology"/>
<dbReference type="EMBL" id="CP001078">
    <property type="protein sequence ID" value="ACD54115.1"/>
    <property type="molecule type" value="Genomic_DNA"/>
</dbReference>
<dbReference type="RefSeq" id="WP_003371022.1">
    <property type="nucleotide sequence ID" value="NC_010723.1"/>
</dbReference>
<dbReference type="SMR" id="B2UY99"/>
<dbReference type="KEGG" id="cbt:CLH_0226"/>
<dbReference type="HOGENOM" id="CLU_074237_2_1_9"/>
<dbReference type="GO" id="GO:0022625">
    <property type="term" value="C:cytosolic large ribosomal subunit"/>
    <property type="evidence" value="ECO:0007669"/>
    <property type="project" value="TreeGrafter"/>
</dbReference>
<dbReference type="GO" id="GO:0070180">
    <property type="term" value="F:large ribosomal subunit rRNA binding"/>
    <property type="evidence" value="ECO:0007669"/>
    <property type="project" value="UniProtKB-UniRule"/>
</dbReference>
<dbReference type="GO" id="GO:0003735">
    <property type="term" value="F:structural constituent of ribosome"/>
    <property type="evidence" value="ECO:0007669"/>
    <property type="project" value="InterPro"/>
</dbReference>
<dbReference type="GO" id="GO:0006412">
    <property type="term" value="P:translation"/>
    <property type="evidence" value="ECO:0007669"/>
    <property type="project" value="UniProtKB-UniRule"/>
</dbReference>
<dbReference type="CDD" id="cd00349">
    <property type="entry name" value="Ribosomal_L11"/>
    <property type="match status" value="1"/>
</dbReference>
<dbReference type="FunFam" id="1.10.10.250:FF:000001">
    <property type="entry name" value="50S ribosomal protein L11"/>
    <property type="match status" value="1"/>
</dbReference>
<dbReference type="FunFam" id="3.30.1550.10:FF:000001">
    <property type="entry name" value="50S ribosomal protein L11"/>
    <property type="match status" value="1"/>
</dbReference>
<dbReference type="Gene3D" id="1.10.10.250">
    <property type="entry name" value="Ribosomal protein L11, C-terminal domain"/>
    <property type="match status" value="1"/>
</dbReference>
<dbReference type="Gene3D" id="3.30.1550.10">
    <property type="entry name" value="Ribosomal protein L11/L12, N-terminal domain"/>
    <property type="match status" value="1"/>
</dbReference>
<dbReference type="HAMAP" id="MF_00736">
    <property type="entry name" value="Ribosomal_uL11"/>
    <property type="match status" value="1"/>
</dbReference>
<dbReference type="InterPro" id="IPR000911">
    <property type="entry name" value="Ribosomal_uL11"/>
</dbReference>
<dbReference type="InterPro" id="IPR006519">
    <property type="entry name" value="Ribosomal_uL11_bac-typ"/>
</dbReference>
<dbReference type="InterPro" id="IPR020783">
    <property type="entry name" value="Ribosomal_uL11_C"/>
</dbReference>
<dbReference type="InterPro" id="IPR036769">
    <property type="entry name" value="Ribosomal_uL11_C_sf"/>
</dbReference>
<dbReference type="InterPro" id="IPR020785">
    <property type="entry name" value="Ribosomal_uL11_CS"/>
</dbReference>
<dbReference type="InterPro" id="IPR020784">
    <property type="entry name" value="Ribosomal_uL11_N"/>
</dbReference>
<dbReference type="InterPro" id="IPR036796">
    <property type="entry name" value="Ribosomal_uL11_N_sf"/>
</dbReference>
<dbReference type="NCBIfam" id="TIGR01632">
    <property type="entry name" value="L11_bact"/>
    <property type="match status" value="1"/>
</dbReference>
<dbReference type="PANTHER" id="PTHR11661">
    <property type="entry name" value="60S RIBOSOMAL PROTEIN L12"/>
    <property type="match status" value="1"/>
</dbReference>
<dbReference type="PANTHER" id="PTHR11661:SF1">
    <property type="entry name" value="LARGE RIBOSOMAL SUBUNIT PROTEIN UL11M"/>
    <property type="match status" value="1"/>
</dbReference>
<dbReference type="Pfam" id="PF00298">
    <property type="entry name" value="Ribosomal_L11"/>
    <property type="match status" value="1"/>
</dbReference>
<dbReference type="Pfam" id="PF03946">
    <property type="entry name" value="Ribosomal_L11_N"/>
    <property type="match status" value="1"/>
</dbReference>
<dbReference type="SMART" id="SM00649">
    <property type="entry name" value="RL11"/>
    <property type="match status" value="1"/>
</dbReference>
<dbReference type="SUPFAM" id="SSF54747">
    <property type="entry name" value="Ribosomal L11/L12e N-terminal domain"/>
    <property type="match status" value="1"/>
</dbReference>
<dbReference type="SUPFAM" id="SSF46906">
    <property type="entry name" value="Ribosomal protein L11, C-terminal domain"/>
    <property type="match status" value="1"/>
</dbReference>
<dbReference type="PROSITE" id="PS00359">
    <property type="entry name" value="RIBOSOMAL_L11"/>
    <property type="match status" value="1"/>
</dbReference>
<accession>B2UY99</accession>
<gene>
    <name evidence="1" type="primary">rplK</name>
    <name type="ordered locus">CLH_0226</name>
</gene>
<keyword id="KW-0488">Methylation</keyword>
<keyword id="KW-0687">Ribonucleoprotein</keyword>
<keyword id="KW-0689">Ribosomal protein</keyword>
<keyword id="KW-0694">RNA-binding</keyword>
<keyword id="KW-0699">rRNA-binding</keyword>
<protein>
    <recommendedName>
        <fullName evidence="1">Large ribosomal subunit protein uL11</fullName>
    </recommendedName>
    <alternativeName>
        <fullName evidence="2">50S ribosomal protein L11</fullName>
    </alternativeName>
</protein>
<evidence type="ECO:0000255" key="1">
    <source>
        <dbReference type="HAMAP-Rule" id="MF_00736"/>
    </source>
</evidence>
<evidence type="ECO:0000305" key="2"/>
<sequence length="141" mass="14921">MAKKVTGMIKLQLQAGKATPAPPVGPALGQHGVNIMGFCKEFNAKTANQAGLIIPVVITVYQDRSFSFILKTPPAAVLIKKELGLESGSGVPNRTKVGSLTKEQVKKIAETKMPDLNAASIETAMKMIEGTARSMGVTIQE</sequence>
<name>RL11_CLOBA</name>